<sequence length="447" mass="50521">MDEEYDVIVLGTGLTECILSGIMSVNGKKVLHMDRNPYYGGESSSITPLEELYKRFQLLEGPPEAMGRGRDWNVDLIPKFLMANGQLVKMLLYTEVTRYLDFKVVEGSFIYKGGKIYKVPSTETEALASNLMGMFEKRRFRKFLVFVANFDENDPKTFEGVDPQSTSMRDVYRKFDLGQDVIDFTGHALALYRTDDYLDQPCLETINRIKLYSESLARYGKSPYLYPLYGLGELPQGFARLSAIYGGTYMLNKPVDDIIMENGKVVGVKSEGEVARCKQLICDPSYIPDRVRKAGQVIRIICILSHPIKNTNDANSCQIIIPQNQVNRKSDIYVCMISYAHNVAAQGKYIAIASTTVETAEPEKEVEPALELLEPIDQKFVAISDLYEPIDDGSESQVFCSCSYDATTHFETTCNDIKDIYKRMAGSAFDFENMKRKQNDVFGEADQ</sequence>
<gene>
    <name type="primary">GDI1</name>
</gene>
<proteinExistence type="evidence at transcript level"/>
<reference key="1">
    <citation type="journal article" date="1998" name="Mol. Biol. Cell">
        <title>Rab11 is required for trans-Golgi network-to-plasma membrane transport and a preferential target for GDP dissociation inhibitor.</title>
        <authorList>
            <person name="Chen W."/>
            <person name="Feng Y."/>
            <person name="Chen D."/>
            <person name="Wandinger-Ness A."/>
        </authorList>
    </citation>
    <scope>NUCLEOTIDE SEQUENCE [MRNA]</scope>
    <scope>FUNCTION</scope>
    <source>
        <strain>Cocker spaniel</strain>
        <tissue>Kidney</tissue>
    </source>
</reference>
<comment type="function">
    <text evidence="4">Regulates the GDP/GTP exchange reaction of most Rab proteins by inhibiting the dissociation of GDP from them, and the subsequent binding of GTP to them. Promotes the dissociation of GDP-bound Rab proteins from the membrane and inhibits their activation. Promotes the dissociation of RAB1A, RAB3A, RAB5A and RAB10 from membranes.</text>
</comment>
<comment type="subunit">
    <text evidence="2">Interacts with RHOH (By similarity). Interacts with the non-phosphorylated forms of RAB1A, RAB3A, RAB5A, RAB5B, RAB5C, RAB8A, RAB8B, RAB10, RAB12, RAB35, and RAB43 (By similarity).</text>
</comment>
<comment type="subcellular location">
    <subcellularLocation>
        <location evidence="1">Cytoplasm</location>
    </subcellularLocation>
    <subcellularLocation>
        <location evidence="1">Golgi apparatus</location>
        <location evidence="1">trans-Golgi network</location>
    </subcellularLocation>
</comment>
<comment type="similarity">
    <text evidence="5">Belongs to the Rab GDI family.</text>
</comment>
<accession>O97555</accession>
<organism>
    <name type="scientific">Canis lupus familiaris</name>
    <name type="common">Dog</name>
    <name type="synonym">Canis familiaris</name>
    <dbReference type="NCBI Taxonomy" id="9615"/>
    <lineage>
        <taxon>Eukaryota</taxon>
        <taxon>Metazoa</taxon>
        <taxon>Chordata</taxon>
        <taxon>Craniata</taxon>
        <taxon>Vertebrata</taxon>
        <taxon>Euteleostomi</taxon>
        <taxon>Mammalia</taxon>
        <taxon>Eutheria</taxon>
        <taxon>Laurasiatheria</taxon>
        <taxon>Carnivora</taxon>
        <taxon>Caniformia</taxon>
        <taxon>Canidae</taxon>
        <taxon>Canis</taxon>
    </lineage>
</organism>
<keyword id="KW-0963">Cytoplasm</keyword>
<keyword id="KW-0333">Golgi apparatus</keyword>
<keyword id="KW-0343">GTPase activation</keyword>
<keyword id="KW-0597">Phosphoprotein</keyword>
<keyword id="KW-1185">Reference proteome</keyword>
<evidence type="ECO:0000250" key="1"/>
<evidence type="ECO:0000250" key="2">
    <source>
        <dbReference type="UniProtKB" id="P31150"/>
    </source>
</evidence>
<evidence type="ECO:0000250" key="3">
    <source>
        <dbReference type="UniProtKB" id="P50396"/>
    </source>
</evidence>
<evidence type="ECO:0000269" key="4">
    <source>
    </source>
</evidence>
<evidence type="ECO:0000305" key="5"/>
<feature type="chain" id="PRO_0000056670" description="Rab GDP dissociation inhibitor alpha">
    <location>
        <begin position="1"/>
        <end position="447"/>
    </location>
</feature>
<feature type="modified residue" description="Phosphoserine" evidence="3">
    <location>
        <position position="427"/>
    </location>
</feature>
<name>GDIA_CANLF</name>
<protein>
    <recommendedName>
        <fullName>Rab GDP dissociation inhibitor alpha</fullName>
        <shortName>Rab GDI alpha</shortName>
    </recommendedName>
    <alternativeName>
        <fullName>Guanosine diphosphate dissociation inhibitor 1</fullName>
        <shortName>GDI-1</shortName>
    </alternativeName>
</protein>
<dbReference type="EMBL" id="AF027360">
    <property type="protein sequence ID" value="AAD04246.1"/>
    <property type="molecule type" value="mRNA"/>
</dbReference>
<dbReference type="RefSeq" id="NP_001003185.1">
    <property type="nucleotide sequence ID" value="NM_001003185.1"/>
</dbReference>
<dbReference type="SMR" id="O97555"/>
<dbReference type="FunCoup" id="O97555">
    <property type="interactions" value="1843"/>
</dbReference>
<dbReference type="STRING" id="9615.ENSCAFP00000028963"/>
<dbReference type="SwissPalm" id="O97555"/>
<dbReference type="PaxDb" id="9615-ENSCAFP00000028963"/>
<dbReference type="GeneID" id="403819"/>
<dbReference type="CTD" id="2664"/>
<dbReference type="InParanoid" id="O97555"/>
<dbReference type="OrthoDB" id="9446342at2759"/>
<dbReference type="Proteomes" id="UP000002254">
    <property type="component" value="Unplaced"/>
</dbReference>
<dbReference type="Proteomes" id="UP000694429">
    <property type="component" value="Unplaced"/>
</dbReference>
<dbReference type="Proteomes" id="UP000694542">
    <property type="component" value="Unplaced"/>
</dbReference>
<dbReference type="Proteomes" id="UP000805418">
    <property type="component" value="Unplaced"/>
</dbReference>
<dbReference type="GO" id="GO:0005829">
    <property type="term" value="C:cytosol"/>
    <property type="evidence" value="ECO:0000318"/>
    <property type="project" value="GO_Central"/>
</dbReference>
<dbReference type="GO" id="GO:0005794">
    <property type="term" value="C:Golgi apparatus"/>
    <property type="evidence" value="ECO:0007669"/>
    <property type="project" value="UniProtKB-SubCell"/>
</dbReference>
<dbReference type="GO" id="GO:0005096">
    <property type="term" value="F:GTPase activator activity"/>
    <property type="evidence" value="ECO:0007669"/>
    <property type="project" value="UniProtKB-KW"/>
</dbReference>
<dbReference type="GO" id="GO:0005093">
    <property type="term" value="F:Rab GDP-dissociation inhibitor activity"/>
    <property type="evidence" value="ECO:0000250"/>
    <property type="project" value="UniProtKB"/>
</dbReference>
<dbReference type="GO" id="GO:0050771">
    <property type="term" value="P:negative regulation of axonogenesis"/>
    <property type="evidence" value="ECO:0000250"/>
    <property type="project" value="UniProtKB"/>
</dbReference>
<dbReference type="GO" id="GO:0090315">
    <property type="term" value="P:negative regulation of protein targeting to membrane"/>
    <property type="evidence" value="ECO:0000250"/>
    <property type="project" value="UniProtKB"/>
</dbReference>
<dbReference type="GO" id="GO:0015031">
    <property type="term" value="P:protein transport"/>
    <property type="evidence" value="ECO:0007669"/>
    <property type="project" value="InterPro"/>
</dbReference>
<dbReference type="GO" id="GO:0032482">
    <property type="term" value="P:Rab protein signal transduction"/>
    <property type="evidence" value="ECO:0000250"/>
    <property type="project" value="UniProtKB"/>
</dbReference>
<dbReference type="GO" id="GO:0016192">
    <property type="term" value="P:vesicle-mediated transport"/>
    <property type="evidence" value="ECO:0000318"/>
    <property type="project" value="GO_Central"/>
</dbReference>
<dbReference type="FunFam" id="1.10.405.10:FF:000001">
    <property type="entry name" value="Rab GDP dissociation inhibitor"/>
    <property type="match status" value="1"/>
</dbReference>
<dbReference type="FunFam" id="3.30.519.10:FF:000005">
    <property type="entry name" value="Rab GDP dissociation inhibitor"/>
    <property type="match status" value="1"/>
</dbReference>
<dbReference type="FunFam" id="3.30.519.10:FF:000014">
    <property type="entry name" value="Rab GDP dissociation inhibitor"/>
    <property type="match status" value="1"/>
</dbReference>
<dbReference type="FunFam" id="3.50.50.60:FF:000158">
    <property type="entry name" value="Rab GDP dissociation inhibitor"/>
    <property type="match status" value="1"/>
</dbReference>
<dbReference type="FunFam" id="3.50.50.60:FF:000232">
    <property type="entry name" value="Rab GDP dissociation inhibitor"/>
    <property type="match status" value="1"/>
</dbReference>
<dbReference type="Gene3D" id="3.50.50.60">
    <property type="entry name" value="FAD/NAD(P)-binding domain"/>
    <property type="match status" value="1"/>
</dbReference>
<dbReference type="Gene3D" id="1.10.405.10">
    <property type="entry name" value="Guanine Nucleotide Dissociation Inhibitor, domain 1"/>
    <property type="match status" value="1"/>
</dbReference>
<dbReference type="Gene3D" id="3.30.519.10">
    <property type="entry name" value="Guanine Nucleotide Dissociation Inhibitor, domain 2"/>
    <property type="match status" value="1"/>
</dbReference>
<dbReference type="InterPro" id="IPR036188">
    <property type="entry name" value="FAD/NAD-bd_sf"/>
</dbReference>
<dbReference type="InterPro" id="IPR018203">
    <property type="entry name" value="GDP_dissociation_inhibitor"/>
</dbReference>
<dbReference type="InterPro" id="IPR000806">
    <property type="entry name" value="RabGDI"/>
</dbReference>
<dbReference type="PANTHER" id="PTHR11787:SF3">
    <property type="entry name" value="RAB GDP DISSOCIATION INHIBITOR ALPHA"/>
    <property type="match status" value="1"/>
</dbReference>
<dbReference type="PANTHER" id="PTHR11787">
    <property type="entry name" value="RAB GDP-DISSOCIATION INHIBITOR"/>
    <property type="match status" value="1"/>
</dbReference>
<dbReference type="Pfam" id="PF00996">
    <property type="entry name" value="GDI"/>
    <property type="match status" value="1"/>
</dbReference>
<dbReference type="PRINTS" id="PR00892">
    <property type="entry name" value="RABGDI"/>
</dbReference>
<dbReference type="PRINTS" id="PR00891">
    <property type="entry name" value="RABGDIREP"/>
</dbReference>
<dbReference type="SUPFAM" id="SSF51905">
    <property type="entry name" value="FAD/NAD(P)-binding domain"/>
    <property type="match status" value="2"/>
</dbReference>